<protein>
    <recommendedName>
        <fullName evidence="1">NAD-dependent protein deacetylase</fullName>
        <ecNumber evidence="1 2">2.3.1.286</ecNumber>
    </recommendedName>
    <alternativeName>
        <fullName evidence="1">Regulatory protein SIR2 homolog</fullName>
    </alternativeName>
</protein>
<keyword id="KW-0963">Cytoplasm</keyword>
<keyword id="KW-0479">Metal-binding</keyword>
<keyword id="KW-0520">NAD</keyword>
<keyword id="KW-1185">Reference proteome</keyword>
<keyword id="KW-0808">Transferase</keyword>
<keyword id="KW-0862">Zinc</keyword>
<sequence>MDISYHEKISKTYELIKKSTYSVAFTGAGISTESGIPDFRSPNGLWQRFRIVTYQEFIIDRKARNEFWKMKRELIQEIINAKPNNAHNALAELEKRGLLKYVITQNIDGLHQMAGNKSVIELHGNQRGYICLDCEKVYPLEEVLKMLKEQELDLRCEVCGGIIKPTIVFFGEPMPEKELLMAQQIANKCDIMFVIGTSLQVEPAASIPRIAYQNGAKLIFINKVQTEWDWIAEIIFYDSAGKVLKDILDVIKSEKF</sequence>
<feature type="chain" id="PRO_1000137253" description="NAD-dependent protein deacetylase">
    <location>
        <begin position="1"/>
        <end position="256"/>
    </location>
</feature>
<feature type="domain" description="Deacetylase sirtuin-type" evidence="2">
    <location>
        <begin position="1"/>
        <end position="254"/>
    </location>
</feature>
<feature type="active site" description="Proton acceptor" evidence="2">
    <location>
        <position position="123"/>
    </location>
</feature>
<feature type="binding site" evidence="1">
    <location>
        <position position="28"/>
    </location>
    <ligand>
        <name>NAD(+)</name>
        <dbReference type="ChEBI" id="CHEBI:57540"/>
    </ligand>
</feature>
<feature type="binding site" evidence="1">
    <location>
        <position position="32"/>
    </location>
    <ligand>
        <name>NAD(+)</name>
        <dbReference type="ChEBI" id="CHEBI:57540"/>
    </ligand>
</feature>
<feature type="binding site" evidence="1">
    <location>
        <position position="39"/>
    </location>
    <ligand>
        <name>NAD(+)</name>
        <dbReference type="ChEBI" id="CHEBI:57540"/>
    </ligand>
</feature>
<feature type="binding site" evidence="1">
    <location>
        <position position="39"/>
    </location>
    <ligand>
        <name>nicotinamide</name>
        <dbReference type="ChEBI" id="CHEBI:17154"/>
    </ligand>
</feature>
<feature type="binding site" evidence="1">
    <location>
        <position position="40"/>
    </location>
    <ligand>
        <name>NAD(+)</name>
        <dbReference type="ChEBI" id="CHEBI:57540"/>
    </ligand>
</feature>
<feature type="binding site" evidence="1">
    <location>
        <position position="105"/>
    </location>
    <ligand>
        <name>NAD(+)</name>
        <dbReference type="ChEBI" id="CHEBI:57540"/>
    </ligand>
</feature>
<feature type="binding site" evidence="1">
    <location>
        <position position="107"/>
    </location>
    <ligand>
        <name>NAD(+)</name>
        <dbReference type="ChEBI" id="CHEBI:57540"/>
    </ligand>
</feature>
<feature type="binding site" evidence="1">
    <location>
        <position position="107"/>
    </location>
    <ligand>
        <name>nicotinamide</name>
        <dbReference type="ChEBI" id="CHEBI:17154"/>
    </ligand>
</feature>
<feature type="binding site" evidence="1">
    <location>
        <position position="108"/>
    </location>
    <ligand>
        <name>NAD(+)</name>
        <dbReference type="ChEBI" id="CHEBI:57540"/>
    </ligand>
</feature>
<feature type="binding site" evidence="1">
    <location>
        <position position="108"/>
    </location>
    <ligand>
        <name>nicotinamide</name>
        <dbReference type="ChEBI" id="CHEBI:17154"/>
    </ligand>
</feature>
<feature type="binding site" evidence="1">
    <location>
        <position position="123"/>
    </location>
    <ligand>
        <name>NAD(+)</name>
        <dbReference type="ChEBI" id="CHEBI:57540"/>
    </ligand>
</feature>
<feature type="binding site" evidence="1">
    <location>
        <position position="131"/>
    </location>
    <ligand>
        <name>Zn(2+)</name>
        <dbReference type="ChEBI" id="CHEBI:29105"/>
    </ligand>
</feature>
<feature type="binding site" evidence="1">
    <location>
        <position position="134"/>
    </location>
    <ligand>
        <name>Zn(2+)</name>
        <dbReference type="ChEBI" id="CHEBI:29105"/>
    </ligand>
</feature>
<feature type="binding site" evidence="1">
    <location>
        <position position="156"/>
    </location>
    <ligand>
        <name>Zn(2+)</name>
        <dbReference type="ChEBI" id="CHEBI:29105"/>
    </ligand>
</feature>
<feature type="binding site" evidence="1">
    <location>
        <position position="159"/>
    </location>
    <ligand>
        <name>Zn(2+)</name>
        <dbReference type="ChEBI" id="CHEBI:29105"/>
    </ligand>
</feature>
<feature type="binding site" evidence="1">
    <location>
        <position position="197"/>
    </location>
    <ligand>
        <name>NAD(+)</name>
        <dbReference type="ChEBI" id="CHEBI:57540"/>
    </ligand>
</feature>
<feature type="binding site" evidence="1">
    <location>
        <position position="198"/>
    </location>
    <ligand>
        <name>NAD(+)</name>
        <dbReference type="ChEBI" id="CHEBI:57540"/>
    </ligand>
</feature>
<feature type="binding site" evidence="1">
    <location>
        <position position="222"/>
    </location>
    <ligand>
        <name>NAD(+)</name>
        <dbReference type="ChEBI" id="CHEBI:57540"/>
    </ligand>
</feature>
<gene>
    <name evidence="1" type="primary">cobB</name>
    <name type="ordered locus">THEYE_A0686</name>
</gene>
<dbReference type="EC" id="2.3.1.286" evidence="1 2"/>
<dbReference type="EMBL" id="CP001147">
    <property type="protein sequence ID" value="ACI21083.1"/>
    <property type="molecule type" value="Genomic_DNA"/>
</dbReference>
<dbReference type="RefSeq" id="WP_012545809.1">
    <property type="nucleotide sequence ID" value="NC_011296.1"/>
</dbReference>
<dbReference type="RefSeq" id="YP_002248528.1">
    <property type="nucleotide sequence ID" value="NC_011296.1"/>
</dbReference>
<dbReference type="SMR" id="B5YJW3"/>
<dbReference type="FunCoup" id="B5YJW3">
    <property type="interactions" value="304"/>
</dbReference>
<dbReference type="STRING" id="289376.THEYE_A0686"/>
<dbReference type="EnsemblBacteria" id="ACI21083">
    <property type="protein sequence ID" value="ACI21083"/>
    <property type="gene ID" value="THEYE_A0686"/>
</dbReference>
<dbReference type="KEGG" id="tye:THEYE_A0686"/>
<dbReference type="PATRIC" id="fig|289376.4.peg.679"/>
<dbReference type="eggNOG" id="COG0846">
    <property type="taxonomic scope" value="Bacteria"/>
</dbReference>
<dbReference type="HOGENOM" id="CLU_023643_3_0_0"/>
<dbReference type="InParanoid" id="B5YJW3"/>
<dbReference type="OrthoDB" id="9800582at2"/>
<dbReference type="Proteomes" id="UP000000718">
    <property type="component" value="Chromosome"/>
</dbReference>
<dbReference type="GO" id="GO:0005737">
    <property type="term" value="C:cytoplasm"/>
    <property type="evidence" value="ECO:0007669"/>
    <property type="project" value="UniProtKB-SubCell"/>
</dbReference>
<dbReference type="GO" id="GO:0017136">
    <property type="term" value="F:histone deacetylase activity, NAD-dependent"/>
    <property type="evidence" value="ECO:0000318"/>
    <property type="project" value="GO_Central"/>
</dbReference>
<dbReference type="GO" id="GO:0070403">
    <property type="term" value="F:NAD+ binding"/>
    <property type="evidence" value="ECO:0000318"/>
    <property type="project" value="GO_Central"/>
</dbReference>
<dbReference type="GO" id="GO:0008270">
    <property type="term" value="F:zinc ion binding"/>
    <property type="evidence" value="ECO:0007669"/>
    <property type="project" value="UniProtKB-UniRule"/>
</dbReference>
<dbReference type="Gene3D" id="3.30.1600.10">
    <property type="entry name" value="SIR2/SIRT2 'Small Domain"/>
    <property type="match status" value="1"/>
</dbReference>
<dbReference type="Gene3D" id="3.40.50.1220">
    <property type="entry name" value="TPP-binding domain"/>
    <property type="match status" value="1"/>
</dbReference>
<dbReference type="HAMAP" id="MF_01968">
    <property type="entry name" value="Sirtuin_ClassU"/>
    <property type="match status" value="1"/>
</dbReference>
<dbReference type="InterPro" id="IPR029035">
    <property type="entry name" value="DHS-like_NAD/FAD-binding_dom"/>
</dbReference>
<dbReference type="InterPro" id="IPR050134">
    <property type="entry name" value="NAD-dep_sirtuin_deacylases"/>
</dbReference>
<dbReference type="InterPro" id="IPR003000">
    <property type="entry name" value="Sirtuin"/>
</dbReference>
<dbReference type="InterPro" id="IPR026591">
    <property type="entry name" value="Sirtuin_cat_small_dom_sf"/>
</dbReference>
<dbReference type="InterPro" id="IPR028628">
    <property type="entry name" value="Sirtuin_class_U"/>
</dbReference>
<dbReference type="InterPro" id="IPR026590">
    <property type="entry name" value="Ssirtuin_cat_dom"/>
</dbReference>
<dbReference type="NCBIfam" id="NF001753">
    <property type="entry name" value="PRK00481.1-3"/>
    <property type="match status" value="1"/>
</dbReference>
<dbReference type="PANTHER" id="PTHR11085:SF4">
    <property type="entry name" value="NAD-DEPENDENT PROTEIN DEACYLASE"/>
    <property type="match status" value="1"/>
</dbReference>
<dbReference type="PANTHER" id="PTHR11085">
    <property type="entry name" value="NAD-DEPENDENT PROTEIN DEACYLASE SIRTUIN-5, MITOCHONDRIAL-RELATED"/>
    <property type="match status" value="1"/>
</dbReference>
<dbReference type="Pfam" id="PF02146">
    <property type="entry name" value="SIR2"/>
    <property type="match status" value="1"/>
</dbReference>
<dbReference type="SUPFAM" id="SSF52467">
    <property type="entry name" value="DHS-like NAD/FAD-binding domain"/>
    <property type="match status" value="1"/>
</dbReference>
<dbReference type="PROSITE" id="PS50305">
    <property type="entry name" value="SIRTUIN"/>
    <property type="match status" value="1"/>
</dbReference>
<comment type="function">
    <text evidence="1">NAD-dependent protein deacetylase which modulates the activities of several enzymes which are inactive in their acetylated form.</text>
</comment>
<comment type="catalytic activity">
    <reaction evidence="1">
        <text>N(6)-acetyl-L-lysyl-[protein] + NAD(+) + H2O = 2''-O-acetyl-ADP-D-ribose + nicotinamide + L-lysyl-[protein]</text>
        <dbReference type="Rhea" id="RHEA:43636"/>
        <dbReference type="Rhea" id="RHEA-COMP:9752"/>
        <dbReference type="Rhea" id="RHEA-COMP:10731"/>
        <dbReference type="ChEBI" id="CHEBI:15377"/>
        <dbReference type="ChEBI" id="CHEBI:17154"/>
        <dbReference type="ChEBI" id="CHEBI:29969"/>
        <dbReference type="ChEBI" id="CHEBI:57540"/>
        <dbReference type="ChEBI" id="CHEBI:61930"/>
        <dbReference type="ChEBI" id="CHEBI:83767"/>
        <dbReference type="EC" id="2.3.1.286"/>
    </reaction>
</comment>
<comment type="cofactor">
    <cofactor evidence="1">
        <name>Zn(2+)</name>
        <dbReference type="ChEBI" id="CHEBI:29105"/>
    </cofactor>
    <text evidence="1">Binds 1 zinc ion per subunit.</text>
</comment>
<comment type="subcellular location">
    <subcellularLocation>
        <location evidence="1">Cytoplasm</location>
    </subcellularLocation>
</comment>
<comment type="similarity">
    <text evidence="1">Belongs to the sirtuin family. Class U subfamily.</text>
</comment>
<organism>
    <name type="scientific">Thermodesulfovibrio yellowstonii (strain ATCC 51303 / DSM 11347 / YP87)</name>
    <dbReference type="NCBI Taxonomy" id="289376"/>
    <lineage>
        <taxon>Bacteria</taxon>
        <taxon>Pseudomonadati</taxon>
        <taxon>Nitrospirota</taxon>
        <taxon>Thermodesulfovibrionia</taxon>
        <taxon>Thermodesulfovibrionales</taxon>
        <taxon>Thermodesulfovibrionaceae</taxon>
        <taxon>Thermodesulfovibrio</taxon>
    </lineage>
</organism>
<reference key="1">
    <citation type="submission" date="2008-08" db="EMBL/GenBank/DDBJ databases">
        <title>The complete genome sequence of Thermodesulfovibrio yellowstonii strain ATCC 51303 / DSM 11347 / YP87.</title>
        <authorList>
            <person name="Dodson R.J."/>
            <person name="Durkin A.S."/>
            <person name="Wu M."/>
            <person name="Eisen J."/>
            <person name="Sutton G."/>
        </authorList>
    </citation>
    <scope>NUCLEOTIDE SEQUENCE [LARGE SCALE GENOMIC DNA]</scope>
    <source>
        <strain>ATCC 51303 / DSM 11347 / YP87</strain>
    </source>
</reference>
<evidence type="ECO:0000255" key="1">
    <source>
        <dbReference type="HAMAP-Rule" id="MF_01968"/>
    </source>
</evidence>
<evidence type="ECO:0000255" key="2">
    <source>
        <dbReference type="PROSITE-ProRule" id="PRU00236"/>
    </source>
</evidence>
<name>NPD_THEYD</name>
<accession>B5YJW3</accession>
<proteinExistence type="inferred from homology"/>